<proteinExistence type="inferred from homology"/>
<gene>
    <name evidence="1" type="primary">ttcA</name>
    <name type="ordered locus">KPN78578_13460</name>
    <name type="ORF">KPN_01375</name>
</gene>
<comment type="function">
    <text evidence="1">Catalyzes the ATP-dependent 2-thiolation of cytidine in position 32 of tRNA, to form 2-thiocytidine (s(2)C32). The sulfur atoms are provided by the cysteine/cysteine desulfurase (IscS) system.</text>
</comment>
<comment type="catalytic activity">
    <reaction evidence="1">
        <text>cytidine(32) in tRNA + S-sulfanyl-L-cysteinyl-[cysteine desulfurase] + AH2 + ATP = 2-thiocytidine(32) in tRNA + L-cysteinyl-[cysteine desulfurase] + A + AMP + diphosphate + H(+)</text>
        <dbReference type="Rhea" id="RHEA:57048"/>
        <dbReference type="Rhea" id="RHEA-COMP:10288"/>
        <dbReference type="Rhea" id="RHEA-COMP:12157"/>
        <dbReference type="Rhea" id="RHEA-COMP:12158"/>
        <dbReference type="Rhea" id="RHEA-COMP:14821"/>
        <dbReference type="ChEBI" id="CHEBI:13193"/>
        <dbReference type="ChEBI" id="CHEBI:15378"/>
        <dbReference type="ChEBI" id="CHEBI:17499"/>
        <dbReference type="ChEBI" id="CHEBI:29950"/>
        <dbReference type="ChEBI" id="CHEBI:30616"/>
        <dbReference type="ChEBI" id="CHEBI:33019"/>
        <dbReference type="ChEBI" id="CHEBI:61963"/>
        <dbReference type="ChEBI" id="CHEBI:82748"/>
        <dbReference type="ChEBI" id="CHEBI:141453"/>
        <dbReference type="ChEBI" id="CHEBI:456215"/>
    </reaction>
    <physiologicalReaction direction="left-to-right" evidence="1">
        <dbReference type="Rhea" id="RHEA:57049"/>
    </physiologicalReaction>
</comment>
<comment type="cofactor">
    <cofactor evidence="1">
        <name>Mg(2+)</name>
        <dbReference type="ChEBI" id="CHEBI:18420"/>
    </cofactor>
</comment>
<comment type="cofactor">
    <cofactor evidence="1">
        <name>[4Fe-4S] cluster</name>
        <dbReference type="ChEBI" id="CHEBI:49883"/>
    </cofactor>
    <text evidence="1">Binds 1 [4Fe-4S] cluster per subunit. The cluster is chelated by three Cys residues, the fourth Fe has a free coordination site that may bind a sulfur atom transferred from the persulfide of IscS.</text>
</comment>
<comment type="pathway">
    <text evidence="1">tRNA modification.</text>
</comment>
<comment type="subunit">
    <text evidence="1">Homodimer.</text>
</comment>
<comment type="subcellular location">
    <subcellularLocation>
        <location evidence="1">Cytoplasm</location>
    </subcellularLocation>
</comment>
<comment type="miscellaneous">
    <text evidence="1">The thiolation reaction likely consists of two steps: a first activation step by ATP to form an adenylated intermediate of the target base of tRNA, and a second nucleophilic substitution step of the sulfur (S) atom supplied by the hydrosulfide attached to the Fe-S cluster.</text>
</comment>
<comment type="similarity">
    <text evidence="1">Belongs to the TtcA family.</text>
</comment>
<keyword id="KW-0004">4Fe-4S</keyword>
<keyword id="KW-0067">ATP-binding</keyword>
<keyword id="KW-0963">Cytoplasm</keyword>
<keyword id="KW-0408">Iron</keyword>
<keyword id="KW-0411">Iron-sulfur</keyword>
<keyword id="KW-0460">Magnesium</keyword>
<keyword id="KW-0479">Metal-binding</keyword>
<keyword id="KW-0547">Nucleotide-binding</keyword>
<keyword id="KW-0694">RNA-binding</keyword>
<keyword id="KW-0808">Transferase</keyword>
<keyword id="KW-0819">tRNA processing</keyword>
<keyword id="KW-0820">tRNA-binding</keyword>
<accession>A6T886</accession>
<sequence length="311" mass="35416">MQENQELTKKEKYNIDKLQKRLRRNVGEAIADFNMIEEGDRIMVCLSGGKDSYTMLEILRNLQKSAPISFSLVAVNLDQKQPGFPEHILPAYLEQLGVEYKIVEENTYGIVKEKIPEGKTTCSLCSRLRRGILYRTATELGATKIALGHHRDDILQTLFLNMFYGGKMKGMPPKLMSDDGKHIVIRPLAYCREKDIERFSQAKGFPIIPCNLCGSQPNLQRQVIADMLRDWDKRYPGRIETMFSAMQNVVPSHLSDVNLFDFKGITHGSEVVDGGDLAFDREDIPLQPAGWQPEEEDARLDELRLNVVEVK</sequence>
<organism>
    <name type="scientific">Klebsiella pneumoniae subsp. pneumoniae (strain ATCC 700721 / MGH 78578)</name>
    <dbReference type="NCBI Taxonomy" id="272620"/>
    <lineage>
        <taxon>Bacteria</taxon>
        <taxon>Pseudomonadati</taxon>
        <taxon>Pseudomonadota</taxon>
        <taxon>Gammaproteobacteria</taxon>
        <taxon>Enterobacterales</taxon>
        <taxon>Enterobacteriaceae</taxon>
        <taxon>Klebsiella/Raoultella group</taxon>
        <taxon>Klebsiella</taxon>
        <taxon>Klebsiella pneumoniae complex</taxon>
    </lineage>
</organism>
<dbReference type="EC" id="2.8.1.-" evidence="1"/>
<dbReference type="EMBL" id="CP000647">
    <property type="protein sequence ID" value="ABR76807.1"/>
    <property type="molecule type" value="Genomic_DNA"/>
</dbReference>
<dbReference type="RefSeq" id="WP_004179591.1">
    <property type="nucleotide sequence ID" value="NC_009648.1"/>
</dbReference>
<dbReference type="SMR" id="A6T886"/>
<dbReference type="STRING" id="272620.KPN_01375"/>
<dbReference type="PaxDb" id="272620-KPN_01375"/>
<dbReference type="DNASU" id="5342410"/>
<dbReference type="EnsemblBacteria" id="ABR76807">
    <property type="protein sequence ID" value="ABR76807"/>
    <property type="gene ID" value="KPN_01375"/>
</dbReference>
<dbReference type="KEGG" id="kpn:KPN_01375"/>
<dbReference type="HOGENOM" id="CLU_026481_0_0_6"/>
<dbReference type="Proteomes" id="UP000000265">
    <property type="component" value="Chromosome"/>
</dbReference>
<dbReference type="GO" id="GO:0005737">
    <property type="term" value="C:cytoplasm"/>
    <property type="evidence" value="ECO:0007669"/>
    <property type="project" value="UniProtKB-SubCell"/>
</dbReference>
<dbReference type="GO" id="GO:0051539">
    <property type="term" value="F:4 iron, 4 sulfur cluster binding"/>
    <property type="evidence" value="ECO:0007669"/>
    <property type="project" value="UniProtKB-UniRule"/>
</dbReference>
<dbReference type="GO" id="GO:0005524">
    <property type="term" value="F:ATP binding"/>
    <property type="evidence" value="ECO:0007669"/>
    <property type="project" value="UniProtKB-UniRule"/>
</dbReference>
<dbReference type="GO" id="GO:0000287">
    <property type="term" value="F:magnesium ion binding"/>
    <property type="evidence" value="ECO:0007669"/>
    <property type="project" value="UniProtKB-UniRule"/>
</dbReference>
<dbReference type="GO" id="GO:0016783">
    <property type="term" value="F:sulfurtransferase activity"/>
    <property type="evidence" value="ECO:0007669"/>
    <property type="project" value="UniProtKB-UniRule"/>
</dbReference>
<dbReference type="GO" id="GO:0000049">
    <property type="term" value="F:tRNA binding"/>
    <property type="evidence" value="ECO:0007669"/>
    <property type="project" value="UniProtKB-KW"/>
</dbReference>
<dbReference type="GO" id="GO:0034227">
    <property type="term" value="P:tRNA thio-modification"/>
    <property type="evidence" value="ECO:0007669"/>
    <property type="project" value="UniProtKB-UniRule"/>
</dbReference>
<dbReference type="CDD" id="cd24138">
    <property type="entry name" value="TtcA-like"/>
    <property type="match status" value="1"/>
</dbReference>
<dbReference type="FunFam" id="3.40.50.620:FF:000046">
    <property type="entry name" value="tRNA-cytidine(32) 2-sulfurtransferase"/>
    <property type="match status" value="1"/>
</dbReference>
<dbReference type="Gene3D" id="3.40.50.620">
    <property type="entry name" value="HUPs"/>
    <property type="match status" value="1"/>
</dbReference>
<dbReference type="HAMAP" id="MF_01850">
    <property type="entry name" value="TtcA"/>
    <property type="match status" value="1"/>
</dbReference>
<dbReference type="InterPro" id="IPR014729">
    <property type="entry name" value="Rossmann-like_a/b/a_fold"/>
</dbReference>
<dbReference type="InterPro" id="IPR011063">
    <property type="entry name" value="TilS/TtcA_N"/>
</dbReference>
<dbReference type="InterPro" id="IPR012089">
    <property type="entry name" value="tRNA_Cyd_32_2_STrfase"/>
</dbReference>
<dbReference type="InterPro" id="IPR035107">
    <property type="entry name" value="tRNA_thiolation_TtcA_Ctu1"/>
</dbReference>
<dbReference type="NCBIfam" id="NF007972">
    <property type="entry name" value="PRK10696.1"/>
    <property type="match status" value="1"/>
</dbReference>
<dbReference type="PANTHER" id="PTHR43686:SF1">
    <property type="entry name" value="AMINOTRAN_5 DOMAIN-CONTAINING PROTEIN"/>
    <property type="match status" value="1"/>
</dbReference>
<dbReference type="PANTHER" id="PTHR43686">
    <property type="entry name" value="SULFURTRANSFERASE-RELATED"/>
    <property type="match status" value="1"/>
</dbReference>
<dbReference type="Pfam" id="PF01171">
    <property type="entry name" value="ATP_bind_3"/>
    <property type="match status" value="1"/>
</dbReference>
<dbReference type="PIRSF" id="PIRSF004976">
    <property type="entry name" value="ATPase_YdaO"/>
    <property type="match status" value="1"/>
</dbReference>
<dbReference type="SUPFAM" id="SSF52402">
    <property type="entry name" value="Adenine nucleotide alpha hydrolases-like"/>
    <property type="match status" value="1"/>
</dbReference>
<name>TTCA_KLEP7</name>
<reference key="1">
    <citation type="submission" date="2006-09" db="EMBL/GenBank/DDBJ databases">
        <authorList>
            <consortium name="The Klebsiella pneumonia Genome Sequencing Project"/>
            <person name="McClelland M."/>
            <person name="Sanderson E.K."/>
            <person name="Spieth J."/>
            <person name="Clifton W.S."/>
            <person name="Latreille P."/>
            <person name="Sabo A."/>
            <person name="Pepin K."/>
            <person name="Bhonagiri V."/>
            <person name="Porwollik S."/>
            <person name="Ali J."/>
            <person name="Wilson R.K."/>
        </authorList>
    </citation>
    <scope>NUCLEOTIDE SEQUENCE [LARGE SCALE GENOMIC DNA]</scope>
    <source>
        <strain>ATCC 700721 / MGH 78578</strain>
    </source>
</reference>
<protein>
    <recommendedName>
        <fullName evidence="1">tRNA-cytidine(32) 2-sulfurtransferase</fullName>
        <ecNumber evidence="1">2.8.1.-</ecNumber>
    </recommendedName>
    <alternativeName>
        <fullName evidence="1">Two-thiocytidine biosynthesis protein A</fullName>
    </alternativeName>
    <alternativeName>
        <fullName evidence="1">tRNA 2-thiocytidine biosynthesis protein TtcA</fullName>
    </alternativeName>
</protein>
<evidence type="ECO:0000255" key="1">
    <source>
        <dbReference type="HAMAP-Rule" id="MF_01850"/>
    </source>
</evidence>
<feature type="chain" id="PRO_0000348757" description="tRNA-cytidine(32) 2-sulfurtransferase">
    <location>
        <begin position="1"/>
        <end position="311"/>
    </location>
</feature>
<feature type="short sequence motif" description="PP-loop motif" evidence="1">
    <location>
        <begin position="47"/>
        <end position="52"/>
    </location>
</feature>
<feature type="binding site" evidence="1">
    <location>
        <position position="122"/>
    </location>
    <ligand>
        <name>[4Fe-4S] cluster</name>
        <dbReference type="ChEBI" id="CHEBI:49883"/>
    </ligand>
</feature>
<feature type="binding site" evidence="1">
    <location>
        <position position="125"/>
    </location>
    <ligand>
        <name>[4Fe-4S] cluster</name>
        <dbReference type="ChEBI" id="CHEBI:49883"/>
    </ligand>
</feature>
<feature type="binding site" evidence="1">
    <location>
        <position position="213"/>
    </location>
    <ligand>
        <name>[4Fe-4S] cluster</name>
        <dbReference type="ChEBI" id="CHEBI:49883"/>
    </ligand>
</feature>